<evidence type="ECO:0000255" key="1">
    <source>
        <dbReference type="HAMAP-Rule" id="MF_01338"/>
    </source>
</evidence>
<gene>
    <name evidence="1" type="primary">rbcL</name>
</gene>
<geneLocation type="chloroplast"/>
<comment type="function">
    <text evidence="1">RuBisCO catalyzes two reactions: the carboxylation of D-ribulose 1,5-bisphosphate, the primary event in carbon dioxide fixation, as well as the oxidative fragmentation of the pentose substrate in the photorespiration process. Both reactions occur simultaneously and in competition at the same active site.</text>
</comment>
<comment type="catalytic activity">
    <reaction evidence="1">
        <text>2 (2R)-3-phosphoglycerate + 2 H(+) = D-ribulose 1,5-bisphosphate + CO2 + H2O</text>
        <dbReference type="Rhea" id="RHEA:23124"/>
        <dbReference type="ChEBI" id="CHEBI:15377"/>
        <dbReference type="ChEBI" id="CHEBI:15378"/>
        <dbReference type="ChEBI" id="CHEBI:16526"/>
        <dbReference type="ChEBI" id="CHEBI:57870"/>
        <dbReference type="ChEBI" id="CHEBI:58272"/>
        <dbReference type="EC" id="4.1.1.39"/>
    </reaction>
</comment>
<comment type="catalytic activity">
    <reaction evidence="1">
        <text>D-ribulose 1,5-bisphosphate + O2 = 2-phosphoglycolate + (2R)-3-phosphoglycerate + 2 H(+)</text>
        <dbReference type="Rhea" id="RHEA:36631"/>
        <dbReference type="ChEBI" id="CHEBI:15378"/>
        <dbReference type="ChEBI" id="CHEBI:15379"/>
        <dbReference type="ChEBI" id="CHEBI:57870"/>
        <dbReference type="ChEBI" id="CHEBI:58033"/>
        <dbReference type="ChEBI" id="CHEBI:58272"/>
    </reaction>
</comment>
<comment type="cofactor">
    <cofactor evidence="1">
        <name>Mg(2+)</name>
        <dbReference type="ChEBI" id="CHEBI:18420"/>
    </cofactor>
    <text evidence="1">Binds 1 Mg(2+) ion per subunit.</text>
</comment>
<comment type="subunit">
    <text evidence="1">Heterohexadecamer of 8 large chains and 8 small chains; disulfide-linked. The disulfide link is formed within the large subunit homodimers.</text>
</comment>
<comment type="subcellular location">
    <subcellularLocation>
        <location>Plastid</location>
        <location>Chloroplast</location>
    </subcellularLocation>
</comment>
<comment type="PTM">
    <text evidence="1">The disulfide bond which can form in the large chain dimeric partners within the hexadecamer appears to be associated with oxidative stress and protein turnover.</text>
</comment>
<comment type="miscellaneous">
    <text evidence="1">The basic functional RuBisCO is composed of a large chain homodimer in a 'head-to-tail' conformation. In form I RuBisCO this homodimer is arranged in a barrel-like tetramer with the small subunits forming a tetrameric 'cap' on each end of the 'barrel'.</text>
</comment>
<comment type="similarity">
    <text evidence="1">Belongs to the RuBisCO large chain family. Type I subfamily.</text>
</comment>
<feature type="chain" id="PRO_0000062440" description="Ribulose bisphosphate carboxylase large chain">
    <location>
        <begin position="1" status="less than"/>
        <end position="471"/>
    </location>
</feature>
<feature type="active site" description="Proton acceptor" evidence="1">
    <location>
        <position position="166"/>
    </location>
</feature>
<feature type="active site" description="Proton acceptor" evidence="1">
    <location>
        <position position="285"/>
    </location>
</feature>
<feature type="binding site" description="in homodimeric partner" evidence="1">
    <location>
        <position position="114"/>
    </location>
    <ligand>
        <name>substrate</name>
    </ligand>
</feature>
<feature type="binding site" evidence="1">
    <location>
        <position position="164"/>
    </location>
    <ligand>
        <name>substrate</name>
    </ligand>
</feature>
<feature type="binding site" evidence="1">
    <location>
        <position position="168"/>
    </location>
    <ligand>
        <name>substrate</name>
    </ligand>
</feature>
<feature type="binding site" description="via carbamate group" evidence="1">
    <location>
        <position position="192"/>
    </location>
    <ligand>
        <name>Mg(2+)</name>
        <dbReference type="ChEBI" id="CHEBI:18420"/>
    </ligand>
</feature>
<feature type="binding site" evidence="1">
    <location>
        <position position="194"/>
    </location>
    <ligand>
        <name>Mg(2+)</name>
        <dbReference type="ChEBI" id="CHEBI:18420"/>
    </ligand>
</feature>
<feature type="binding site" evidence="1">
    <location>
        <position position="195"/>
    </location>
    <ligand>
        <name>Mg(2+)</name>
        <dbReference type="ChEBI" id="CHEBI:18420"/>
    </ligand>
</feature>
<feature type="binding site" evidence="1">
    <location>
        <position position="286"/>
    </location>
    <ligand>
        <name>substrate</name>
    </ligand>
</feature>
<feature type="binding site" evidence="1">
    <location>
        <position position="318"/>
    </location>
    <ligand>
        <name>substrate</name>
    </ligand>
</feature>
<feature type="binding site" evidence="1">
    <location>
        <position position="370"/>
    </location>
    <ligand>
        <name>substrate</name>
    </ligand>
</feature>
<feature type="site" description="Transition state stabilizer" evidence="1">
    <location>
        <position position="325"/>
    </location>
</feature>
<feature type="modified residue" description="N6,N6,N6-trimethyllysine" evidence="1">
    <location>
        <position position="5"/>
    </location>
</feature>
<feature type="modified residue" description="N6-carboxylysine" evidence="1">
    <location>
        <position position="192"/>
    </location>
</feature>
<feature type="disulfide bond" description="Interchain; in linked form" evidence="1">
    <location>
        <position position="238"/>
    </location>
</feature>
<feature type="non-terminal residue">
    <location>
        <position position="1"/>
    </location>
</feature>
<dbReference type="EC" id="4.1.1.39" evidence="1"/>
<dbReference type="EMBL" id="X83633">
    <property type="protein sequence ID" value="CAA58611.1"/>
    <property type="molecule type" value="Genomic_DNA"/>
</dbReference>
<dbReference type="SMR" id="Q33406"/>
<dbReference type="GO" id="GO:0009507">
    <property type="term" value="C:chloroplast"/>
    <property type="evidence" value="ECO:0007669"/>
    <property type="project" value="UniProtKB-SubCell"/>
</dbReference>
<dbReference type="GO" id="GO:0000287">
    <property type="term" value="F:magnesium ion binding"/>
    <property type="evidence" value="ECO:0007669"/>
    <property type="project" value="InterPro"/>
</dbReference>
<dbReference type="GO" id="GO:0004497">
    <property type="term" value="F:monooxygenase activity"/>
    <property type="evidence" value="ECO:0007669"/>
    <property type="project" value="UniProtKB-KW"/>
</dbReference>
<dbReference type="GO" id="GO:0016984">
    <property type="term" value="F:ribulose-bisphosphate carboxylase activity"/>
    <property type="evidence" value="ECO:0007669"/>
    <property type="project" value="UniProtKB-EC"/>
</dbReference>
<dbReference type="GO" id="GO:0009853">
    <property type="term" value="P:photorespiration"/>
    <property type="evidence" value="ECO:0007669"/>
    <property type="project" value="UniProtKB-KW"/>
</dbReference>
<dbReference type="GO" id="GO:0019253">
    <property type="term" value="P:reductive pentose-phosphate cycle"/>
    <property type="evidence" value="ECO:0007669"/>
    <property type="project" value="UniProtKB-KW"/>
</dbReference>
<dbReference type="CDD" id="cd08212">
    <property type="entry name" value="RuBisCO_large_I"/>
    <property type="match status" value="1"/>
</dbReference>
<dbReference type="FunFam" id="3.20.20.110:FF:000001">
    <property type="entry name" value="Ribulose bisphosphate carboxylase large chain"/>
    <property type="match status" value="1"/>
</dbReference>
<dbReference type="FunFam" id="3.30.70.150:FF:000001">
    <property type="entry name" value="Ribulose bisphosphate carboxylase large chain"/>
    <property type="match status" value="1"/>
</dbReference>
<dbReference type="Gene3D" id="3.20.20.110">
    <property type="entry name" value="Ribulose bisphosphate carboxylase, large subunit, C-terminal domain"/>
    <property type="match status" value="1"/>
</dbReference>
<dbReference type="Gene3D" id="3.30.70.150">
    <property type="entry name" value="RuBisCO large subunit, N-terminal domain"/>
    <property type="match status" value="1"/>
</dbReference>
<dbReference type="HAMAP" id="MF_01338">
    <property type="entry name" value="RuBisCO_L_type1"/>
    <property type="match status" value="1"/>
</dbReference>
<dbReference type="InterPro" id="IPR033966">
    <property type="entry name" value="RuBisCO"/>
</dbReference>
<dbReference type="InterPro" id="IPR020878">
    <property type="entry name" value="RuBisCo_large_chain_AS"/>
</dbReference>
<dbReference type="InterPro" id="IPR000685">
    <property type="entry name" value="RuBisCO_lsu_C"/>
</dbReference>
<dbReference type="InterPro" id="IPR036376">
    <property type="entry name" value="RuBisCO_lsu_C_sf"/>
</dbReference>
<dbReference type="InterPro" id="IPR017443">
    <property type="entry name" value="RuBisCO_lsu_fd_N"/>
</dbReference>
<dbReference type="InterPro" id="IPR036422">
    <property type="entry name" value="RuBisCO_lsu_N_sf"/>
</dbReference>
<dbReference type="InterPro" id="IPR020888">
    <property type="entry name" value="RuBisCO_lsuI"/>
</dbReference>
<dbReference type="NCBIfam" id="NF003252">
    <property type="entry name" value="PRK04208.1"/>
    <property type="match status" value="1"/>
</dbReference>
<dbReference type="PANTHER" id="PTHR42704">
    <property type="entry name" value="RIBULOSE BISPHOSPHATE CARBOXYLASE"/>
    <property type="match status" value="1"/>
</dbReference>
<dbReference type="PANTHER" id="PTHR42704:SF15">
    <property type="entry name" value="RIBULOSE BISPHOSPHATE CARBOXYLASE LARGE CHAIN"/>
    <property type="match status" value="1"/>
</dbReference>
<dbReference type="Pfam" id="PF00016">
    <property type="entry name" value="RuBisCO_large"/>
    <property type="match status" value="1"/>
</dbReference>
<dbReference type="Pfam" id="PF02788">
    <property type="entry name" value="RuBisCO_large_N"/>
    <property type="match status" value="1"/>
</dbReference>
<dbReference type="SFLD" id="SFLDG01052">
    <property type="entry name" value="RuBisCO"/>
    <property type="match status" value="1"/>
</dbReference>
<dbReference type="SFLD" id="SFLDS00014">
    <property type="entry name" value="RuBisCO"/>
    <property type="match status" value="1"/>
</dbReference>
<dbReference type="SFLD" id="SFLDG00301">
    <property type="entry name" value="RuBisCO-like_proteins"/>
    <property type="match status" value="1"/>
</dbReference>
<dbReference type="SUPFAM" id="SSF51649">
    <property type="entry name" value="RuBisCo, C-terminal domain"/>
    <property type="match status" value="1"/>
</dbReference>
<dbReference type="SUPFAM" id="SSF54966">
    <property type="entry name" value="RuBisCO, large subunit, small (N-terminal) domain"/>
    <property type="match status" value="1"/>
</dbReference>
<dbReference type="PROSITE" id="PS00157">
    <property type="entry name" value="RUBISCO_LARGE"/>
    <property type="match status" value="1"/>
</dbReference>
<name>RBL_DEPGR</name>
<proteinExistence type="inferred from homology"/>
<accession>Q33406</accession>
<protein>
    <recommendedName>
        <fullName evidence="1">Ribulose bisphosphate carboxylase large chain</fullName>
        <shortName evidence="1">RuBisCO large subunit</shortName>
        <ecNumber evidence="1">4.1.1.39</ecNumber>
    </recommendedName>
</protein>
<keyword id="KW-0113">Calvin cycle</keyword>
<keyword id="KW-0120">Carbon dioxide fixation</keyword>
<keyword id="KW-0150">Chloroplast</keyword>
<keyword id="KW-1015">Disulfide bond</keyword>
<keyword id="KW-0456">Lyase</keyword>
<keyword id="KW-0460">Magnesium</keyword>
<keyword id="KW-0479">Metal-binding</keyword>
<keyword id="KW-0488">Methylation</keyword>
<keyword id="KW-0503">Monooxygenase</keyword>
<keyword id="KW-0560">Oxidoreductase</keyword>
<keyword id="KW-0601">Photorespiration</keyword>
<keyword id="KW-0602">Photosynthesis</keyword>
<keyword id="KW-0934">Plastid</keyword>
<organism>
    <name type="scientific">Deppea grandiflora</name>
    <dbReference type="NCBI Taxonomy" id="43474"/>
    <lineage>
        <taxon>Eukaryota</taxon>
        <taxon>Viridiplantae</taxon>
        <taxon>Streptophyta</taxon>
        <taxon>Embryophyta</taxon>
        <taxon>Tracheophyta</taxon>
        <taxon>Spermatophyta</taxon>
        <taxon>Magnoliopsida</taxon>
        <taxon>eudicotyledons</taxon>
        <taxon>Gunneridae</taxon>
        <taxon>Pentapetalae</taxon>
        <taxon>asterids</taxon>
        <taxon>lamiids</taxon>
        <taxon>Gentianales</taxon>
        <taxon>Rubiaceae</taxon>
        <taxon>Cinchonoideae</taxon>
        <taxon>Hamelieae</taxon>
        <taxon>Deppea</taxon>
    </lineage>
</organism>
<sequence length="471" mass="52322">SVGFKAGVKEYKLTYYTPEYETKDTDILAAFRVTPQPGVPPEEAGAAVRAESSTGTWTTVWTDGLTSLDRYKGRCYHIEPVLGEEDQYIAYVAYPLDLFEEGSVTNMFTSIVGNVFGFKALRALRLEDLRVPTAYIKTFQGPPHGIQVERDKLNKYGRPLLGCTIKPKLGLSAKNYGRAVYECLRGGLDFTKDDENVNSQPFMRWRDRFLFCAEALFKAQAETGEIKGHYLNATAGTCEEMMKRAVFARELGAPIVMHDYLTGGFTANTSLAHYCRDNGLLLHIHRAMHAVIDRQKNHGMHFRVLAKALRLSGGDHVHAGTVVGKLEGERDITLGFVDLLRDDFVEKDRSRGIYFTQDWVSLPGVLAVRSGGIHVWHMPALTEIFGDDSVLQFGGGTLGHPWGNAPGAVANRVALEACVKARNEGRDLAAEGNEIIREASKWSPELAAACEVWKAIRFNFKAVDTLDPERE</sequence>
<reference key="1">
    <citation type="journal article" date="1995" name="Ann. Mo. Bot. Gard.">
        <title>Subfamilial and tribal relationships in the Rubiaceae based on rbcL sequence data.</title>
        <authorList>
            <person name="Bremer B."/>
            <person name="Andreasen K."/>
            <person name="Olsson D."/>
        </authorList>
    </citation>
    <scope>NUCLEOTIDE SEQUENCE [GENOMIC DNA]</scope>
</reference>